<organism>
    <name type="scientific">Vaccinia virus (strain Copenhagen)</name>
    <name type="common">VACV</name>
    <dbReference type="NCBI Taxonomy" id="10249"/>
    <lineage>
        <taxon>Viruses</taxon>
        <taxon>Varidnaviria</taxon>
        <taxon>Bamfordvirae</taxon>
        <taxon>Nucleocytoviricota</taxon>
        <taxon>Pokkesviricetes</taxon>
        <taxon>Chitovirales</taxon>
        <taxon>Poxviridae</taxon>
        <taxon>Chordopoxvirinae</taxon>
        <taxon>Orthopoxvirus</taxon>
        <taxon>Vaccinia virus</taxon>
    </lineage>
</organism>
<reference key="1">
    <citation type="journal article" date="1990" name="Virology">
        <title>The complete DNA sequence of vaccinia virus.</title>
        <authorList>
            <person name="Goebel S.J."/>
            <person name="Johnson G.P."/>
            <person name="Perkus M.E."/>
            <person name="Davis S.W."/>
            <person name="Winslow J.P."/>
            <person name="Paoletti E."/>
        </authorList>
    </citation>
    <scope>NUCLEOTIDE SEQUENCE [LARGE SCALE GENOMIC DNA]</scope>
</reference>
<reference key="2">
    <citation type="journal article" date="1990" name="Virology">
        <title>Appendix to 'The complete DNA sequence of vaccinia virus'.</title>
        <authorList>
            <person name="Goebel S.J."/>
            <person name="Johnson G.P."/>
            <person name="Perkus M.E."/>
            <person name="Davis S.W."/>
            <person name="Winslow J.P."/>
            <person name="Paoletti E."/>
        </authorList>
    </citation>
    <scope>COMPLETE GENOME</scope>
</reference>
<protein>
    <recommendedName>
        <fullName>Thymidine kinase</fullName>
        <ecNumber>2.7.1.21</ecNumber>
    </recommendedName>
</protein>
<sequence length="177" mass="20100">MNGGHIQLIIGPMFSGKSTELIRRVRRYQIAQYKCVTIKYSNDNRYGTGLWTHDKNNFEALEATKLCDVLESITDFSVIGIDEGQFFPDIVEFCERMANEGKIVIVAALDGTFQRKPFNNILNLIPLSEMVVKLTAVCMKCFKEASFSKRLGEETEIEIIGGNDMYQSVCRKCYIDS</sequence>
<keyword id="KW-0067">ATP-binding</keyword>
<keyword id="KW-1015">Disulfide bond</keyword>
<keyword id="KW-0237">DNA synthesis</keyword>
<keyword id="KW-0418">Kinase</keyword>
<keyword id="KW-0479">Metal-binding</keyword>
<keyword id="KW-0547">Nucleotide-binding</keyword>
<keyword id="KW-1185">Reference proteome</keyword>
<keyword id="KW-0808">Transferase</keyword>
<keyword id="KW-0862">Zinc</keyword>
<feature type="chain" id="PRO_0000174938" description="Thymidine kinase">
    <location>
        <begin position="1"/>
        <end position="177"/>
    </location>
</feature>
<feature type="active site" description="Proton acceptor" evidence="2">
    <location>
        <position position="83"/>
    </location>
</feature>
<feature type="binding site" evidence="2">
    <location>
        <begin position="11"/>
        <end position="18"/>
    </location>
    <ligand>
        <name>ATP</name>
        <dbReference type="ChEBI" id="CHEBI:30616"/>
    </ligand>
</feature>
<feature type="binding site" evidence="2">
    <location>
        <position position="113"/>
    </location>
    <ligand>
        <name>substrate</name>
    </ligand>
</feature>
<feature type="binding site" evidence="2">
    <location>
        <position position="138"/>
    </location>
    <ligand>
        <name>Zn(2+)</name>
        <dbReference type="ChEBI" id="CHEBI:29105"/>
    </ligand>
</feature>
<feature type="binding site" evidence="2">
    <location>
        <position position="141"/>
    </location>
    <ligand>
        <name>Zn(2+)</name>
        <dbReference type="ChEBI" id="CHEBI:29105"/>
    </ligand>
</feature>
<feature type="binding site" evidence="2">
    <location>
        <begin position="157"/>
        <end position="161"/>
    </location>
    <ligand>
        <name>substrate</name>
    </ligand>
</feature>
<feature type="binding site" evidence="2">
    <location>
        <position position="170"/>
    </location>
    <ligand>
        <name>Zn(2+)</name>
        <dbReference type="ChEBI" id="CHEBI:29105"/>
    </ligand>
</feature>
<feature type="binding site" evidence="2">
    <location>
        <position position="173"/>
    </location>
    <ligand>
        <name>Zn(2+)</name>
        <dbReference type="ChEBI" id="CHEBI:29105"/>
    </ligand>
</feature>
<feature type="disulfide bond" description="Interchain (with C-173)" evidence="2">
    <location>
        <position position="170"/>
    </location>
</feature>
<feature type="disulfide bond" description="Interchain (with C-170)" evidence="2">
    <location>
        <position position="173"/>
    </location>
</feature>
<name>KITH_VACCC</name>
<evidence type="ECO:0000250" key="1"/>
<evidence type="ECO:0000250" key="2">
    <source>
        <dbReference type="UniProtKB" id="O57203"/>
    </source>
</evidence>
<evidence type="ECO:0000305" key="3"/>
<organismHost>
    <name type="scientific">Homo sapiens</name>
    <name type="common">Human</name>
    <dbReference type="NCBI Taxonomy" id="9606"/>
</organismHost>
<comment type="function">
    <text evidence="2">Phosphorylates thymidine and thymidine analogs, such as azidothymidine (AZT). Part of the salvage pathway for pyrimidine deoxyribonucleotide synthesis.</text>
</comment>
<comment type="catalytic activity">
    <reaction evidence="2">
        <text>thymidine + ATP = dTMP + ADP + H(+)</text>
        <dbReference type="Rhea" id="RHEA:19129"/>
        <dbReference type="ChEBI" id="CHEBI:15378"/>
        <dbReference type="ChEBI" id="CHEBI:17748"/>
        <dbReference type="ChEBI" id="CHEBI:30616"/>
        <dbReference type="ChEBI" id="CHEBI:63528"/>
        <dbReference type="ChEBI" id="CHEBI:456216"/>
        <dbReference type="EC" id="2.7.1.21"/>
    </reaction>
</comment>
<comment type="subunit">
    <text evidence="1">Homotetramer. Two molecules of substrate bind to each enzyme tetramer.</text>
</comment>
<comment type="similarity">
    <text evidence="3">Belongs to the thymidine kinase family.</text>
</comment>
<dbReference type="EC" id="2.7.1.21"/>
<dbReference type="EMBL" id="M35027">
    <property type="protein sequence ID" value="AAA48082.1"/>
    <property type="molecule type" value="Genomic_DNA"/>
</dbReference>
<dbReference type="PIR" id="A00609">
    <property type="entry name" value="KIVZ"/>
</dbReference>
<dbReference type="SMR" id="P68564"/>
<dbReference type="Proteomes" id="UP000008269">
    <property type="component" value="Segment"/>
</dbReference>
<dbReference type="GO" id="GO:0005524">
    <property type="term" value="F:ATP binding"/>
    <property type="evidence" value="ECO:0007669"/>
    <property type="project" value="UniProtKB-KW"/>
</dbReference>
<dbReference type="GO" id="GO:0046872">
    <property type="term" value="F:metal ion binding"/>
    <property type="evidence" value="ECO:0007669"/>
    <property type="project" value="UniProtKB-KW"/>
</dbReference>
<dbReference type="GO" id="GO:0004797">
    <property type="term" value="F:thymidine kinase activity"/>
    <property type="evidence" value="ECO:0007669"/>
    <property type="project" value="UniProtKB-EC"/>
</dbReference>
<dbReference type="GO" id="GO:0071897">
    <property type="term" value="P:DNA biosynthetic process"/>
    <property type="evidence" value="ECO:0007669"/>
    <property type="project" value="UniProtKB-KW"/>
</dbReference>
<dbReference type="GO" id="GO:0046104">
    <property type="term" value="P:thymidine metabolic process"/>
    <property type="evidence" value="ECO:0007669"/>
    <property type="project" value="TreeGrafter"/>
</dbReference>
<dbReference type="FunFam" id="3.30.60.20:FF:000028">
    <property type="entry name" value="Thymidine kinase"/>
    <property type="match status" value="1"/>
</dbReference>
<dbReference type="FunFam" id="3.40.50.300:FF:000761">
    <property type="entry name" value="Thymidine kinase"/>
    <property type="match status" value="1"/>
</dbReference>
<dbReference type="Gene3D" id="3.30.60.20">
    <property type="match status" value="1"/>
</dbReference>
<dbReference type="Gene3D" id="3.40.50.300">
    <property type="entry name" value="P-loop containing nucleotide triphosphate hydrolases"/>
    <property type="match status" value="1"/>
</dbReference>
<dbReference type="InterPro" id="IPR027417">
    <property type="entry name" value="P-loop_NTPase"/>
</dbReference>
<dbReference type="InterPro" id="IPR001267">
    <property type="entry name" value="Thymidine_kinase"/>
</dbReference>
<dbReference type="InterPro" id="IPR020633">
    <property type="entry name" value="Thymidine_kinase_CS"/>
</dbReference>
<dbReference type="PANTHER" id="PTHR11441">
    <property type="entry name" value="THYMIDINE KINASE"/>
    <property type="match status" value="1"/>
</dbReference>
<dbReference type="PANTHER" id="PTHR11441:SF0">
    <property type="entry name" value="THYMIDINE KINASE, CYTOSOLIC"/>
    <property type="match status" value="1"/>
</dbReference>
<dbReference type="Pfam" id="PF00265">
    <property type="entry name" value="TK"/>
    <property type="match status" value="1"/>
</dbReference>
<dbReference type="PIRSF" id="PIRSF035805">
    <property type="entry name" value="TK_cell"/>
    <property type="match status" value="1"/>
</dbReference>
<dbReference type="SUPFAM" id="SSF57716">
    <property type="entry name" value="Glucocorticoid receptor-like (DNA-binding domain)"/>
    <property type="match status" value="1"/>
</dbReference>
<dbReference type="SUPFAM" id="SSF52540">
    <property type="entry name" value="P-loop containing nucleoside triphosphate hydrolases"/>
    <property type="match status" value="1"/>
</dbReference>
<dbReference type="PROSITE" id="PS00603">
    <property type="entry name" value="TK_CELLULAR_TYPE"/>
    <property type="match status" value="1"/>
</dbReference>
<gene>
    <name type="primary">OPG101</name>
    <name type="synonym">TK</name>
    <name type="ORF">J2R</name>
</gene>
<accession>P68564</accession>
<accession>P03297</accession>
<proteinExistence type="inferred from homology"/>